<protein>
    <recommendedName>
        <fullName evidence="1">Pantothenate kinase</fullName>
        <ecNumber evidence="1">2.7.1.33</ecNumber>
    </recommendedName>
    <alternativeName>
        <fullName evidence="1">Pantothenic acid kinase</fullName>
    </alternativeName>
</protein>
<name>COAA_YERPN</name>
<evidence type="ECO:0000255" key="1">
    <source>
        <dbReference type="HAMAP-Rule" id="MF_00215"/>
    </source>
</evidence>
<reference key="1">
    <citation type="journal article" date="2006" name="J. Bacteriol.">
        <title>Complete genome sequence of Yersinia pestis strains Antiqua and Nepal516: evidence of gene reduction in an emerging pathogen.</title>
        <authorList>
            <person name="Chain P.S.G."/>
            <person name="Hu P."/>
            <person name="Malfatti S.A."/>
            <person name="Radnedge L."/>
            <person name="Larimer F."/>
            <person name="Vergez L.M."/>
            <person name="Worsham P."/>
            <person name="Chu M.C."/>
            <person name="Andersen G.L."/>
        </authorList>
    </citation>
    <scope>NUCLEOTIDE SEQUENCE [LARGE SCALE GENOMIC DNA]</scope>
    <source>
        <strain>Nepal516</strain>
    </source>
</reference>
<reference key="2">
    <citation type="submission" date="2009-04" db="EMBL/GenBank/DDBJ databases">
        <title>Yersinia pestis Nepal516A whole genome shotgun sequencing project.</title>
        <authorList>
            <person name="Plunkett G. III"/>
            <person name="Anderson B.D."/>
            <person name="Baumler D.J."/>
            <person name="Burland V."/>
            <person name="Cabot E.L."/>
            <person name="Glasner J.D."/>
            <person name="Mau B."/>
            <person name="Neeno-Eckwall E."/>
            <person name="Perna N.T."/>
            <person name="Munk A.C."/>
            <person name="Tapia R."/>
            <person name="Green L.D."/>
            <person name="Rogers Y.C."/>
            <person name="Detter J.C."/>
            <person name="Bruce D.C."/>
            <person name="Brettin T.S."/>
        </authorList>
    </citation>
    <scope>NUCLEOTIDE SEQUENCE [LARGE SCALE GENOMIC DNA]</scope>
    <source>
        <strain>Nepal516</strain>
    </source>
</reference>
<proteinExistence type="inferred from homology"/>
<accession>Q1CN90</accession>
<accession>C4GND6</accession>
<feature type="chain" id="PRO_1000043276" description="Pantothenate kinase">
    <location>
        <begin position="1"/>
        <end position="316"/>
    </location>
</feature>
<feature type="binding site" evidence="1">
    <location>
        <begin position="95"/>
        <end position="102"/>
    </location>
    <ligand>
        <name>ATP</name>
        <dbReference type="ChEBI" id="CHEBI:30616"/>
    </ligand>
</feature>
<gene>
    <name evidence="1" type="primary">coaA</name>
    <name type="ordered locus">YPN_0207</name>
    <name type="ORF">YP516_0182</name>
</gene>
<dbReference type="EC" id="2.7.1.33" evidence="1"/>
<dbReference type="EMBL" id="CP000305">
    <property type="protein sequence ID" value="ABG16540.1"/>
    <property type="molecule type" value="Genomic_DNA"/>
</dbReference>
<dbReference type="EMBL" id="ACNQ01000003">
    <property type="protein sequence ID" value="EEO78493.1"/>
    <property type="molecule type" value="Genomic_DNA"/>
</dbReference>
<dbReference type="RefSeq" id="WP_002212290.1">
    <property type="nucleotide sequence ID" value="NZ_ACNQ01000003.1"/>
</dbReference>
<dbReference type="SMR" id="Q1CN90"/>
<dbReference type="GeneID" id="57974956"/>
<dbReference type="KEGG" id="ypn:YPN_0207"/>
<dbReference type="HOGENOM" id="CLU_053818_1_1_6"/>
<dbReference type="UniPathway" id="UPA00241">
    <property type="reaction ID" value="UER00352"/>
</dbReference>
<dbReference type="Proteomes" id="UP000008936">
    <property type="component" value="Chromosome"/>
</dbReference>
<dbReference type="GO" id="GO:0005737">
    <property type="term" value="C:cytoplasm"/>
    <property type="evidence" value="ECO:0007669"/>
    <property type="project" value="UniProtKB-SubCell"/>
</dbReference>
<dbReference type="GO" id="GO:0005524">
    <property type="term" value="F:ATP binding"/>
    <property type="evidence" value="ECO:0007669"/>
    <property type="project" value="UniProtKB-UniRule"/>
</dbReference>
<dbReference type="GO" id="GO:0004594">
    <property type="term" value="F:pantothenate kinase activity"/>
    <property type="evidence" value="ECO:0007669"/>
    <property type="project" value="UniProtKB-UniRule"/>
</dbReference>
<dbReference type="GO" id="GO:0015937">
    <property type="term" value="P:coenzyme A biosynthetic process"/>
    <property type="evidence" value="ECO:0007669"/>
    <property type="project" value="UniProtKB-UniRule"/>
</dbReference>
<dbReference type="CDD" id="cd02025">
    <property type="entry name" value="PanK"/>
    <property type="match status" value="1"/>
</dbReference>
<dbReference type="FunFam" id="3.40.50.300:FF:000242">
    <property type="entry name" value="Pantothenate kinase"/>
    <property type="match status" value="1"/>
</dbReference>
<dbReference type="Gene3D" id="3.40.50.300">
    <property type="entry name" value="P-loop containing nucleotide triphosphate hydrolases"/>
    <property type="match status" value="1"/>
</dbReference>
<dbReference type="HAMAP" id="MF_00215">
    <property type="entry name" value="Pantothen_kinase_1"/>
    <property type="match status" value="1"/>
</dbReference>
<dbReference type="InterPro" id="IPR027417">
    <property type="entry name" value="P-loop_NTPase"/>
</dbReference>
<dbReference type="InterPro" id="IPR004566">
    <property type="entry name" value="PanK"/>
</dbReference>
<dbReference type="InterPro" id="IPR006083">
    <property type="entry name" value="PRK/URK"/>
</dbReference>
<dbReference type="NCBIfam" id="TIGR00554">
    <property type="entry name" value="panK_bact"/>
    <property type="match status" value="1"/>
</dbReference>
<dbReference type="PANTHER" id="PTHR10285">
    <property type="entry name" value="URIDINE KINASE"/>
    <property type="match status" value="1"/>
</dbReference>
<dbReference type="Pfam" id="PF00485">
    <property type="entry name" value="PRK"/>
    <property type="match status" value="1"/>
</dbReference>
<dbReference type="PIRSF" id="PIRSF000545">
    <property type="entry name" value="Pantothenate_kin"/>
    <property type="match status" value="1"/>
</dbReference>
<dbReference type="SUPFAM" id="SSF52540">
    <property type="entry name" value="P-loop containing nucleoside triphosphate hydrolases"/>
    <property type="match status" value="1"/>
</dbReference>
<organism>
    <name type="scientific">Yersinia pestis bv. Antiqua (strain Nepal516)</name>
    <dbReference type="NCBI Taxonomy" id="377628"/>
    <lineage>
        <taxon>Bacteria</taxon>
        <taxon>Pseudomonadati</taxon>
        <taxon>Pseudomonadota</taxon>
        <taxon>Gammaproteobacteria</taxon>
        <taxon>Enterobacterales</taxon>
        <taxon>Yersiniaceae</taxon>
        <taxon>Yersinia</taxon>
    </lineage>
</organism>
<sequence length="316" mass="36016">MTKREQSLATPYLQFDRTQWAALRDSVPLTLTEEEIVKLKGINEDLSLDEVAQIYLPLSRLLNFYISSNLRRQAVLEQFLGTDGQRIPYVIGIAGSVAVGKSTTARLLQALLSRWPEHRSVELITTDGFLHPNKVLNERGLMKKKGFPESYDMHNLVKFVSEVKSGADYVTAPVYSHLIYDVVPDGNKVIKQPDILILEGLNVLQSGMDYPHDPHHVFVSDFVDFSIYVDAPEDLLQSWYINRFLKFRQGAFSNPDSYFHNYAKLPETEAIKIATQLWNEINGLNLKQNILPTRERASLIMTKSANHAVESVRLRK</sequence>
<comment type="catalytic activity">
    <reaction evidence="1">
        <text>(R)-pantothenate + ATP = (R)-4'-phosphopantothenate + ADP + H(+)</text>
        <dbReference type="Rhea" id="RHEA:16373"/>
        <dbReference type="ChEBI" id="CHEBI:10986"/>
        <dbReference type="ChEBI" id="CHEBI:15378"/>
        <dbReference type="ChEBI" id="CHEBI:29032"/>
        <dbReference type="ChEBI" id="CHEBI:30616"/>
        <dbReference type="ChEBI" id="CHEBI:456216"/>
        <dbReference type="EC" id="2.7.1.33"/>
    </reaction>
</comment>
<comment type="pathway">
    <text evidence="1">Cofactor biosynthesis; coenzyme A biosynthesis; CoA from (R)-pantothenate: step 1/5.</text>
</comment>
<comment type="subcellular location">
    <subcellularLocation>
        <location evidence="1">Cytoplasm</location>
    </subcellularLocation>
</comment>
<comment type="similarity">
    <text evidence="1">Belongs to the prokaryotic pantothenate kinase family.</text>
</comment>
<keyword id="KW-0067">ATP-binding</keyword>
<keyword id="KW-0173">Coenzyme A biosynthesis</keyword>
<keyword id="KW-0963">Cytoplasm</keyword>
<keyword id="KW-0418">Kinase</keyword>
<keyword id="KW-0547">Nucleotide-binding</keyword>
<keyword id="KW-0808">Transferase</keyword>